<evidence type="ECO:0000255" key="1"/>
<evidence type="ECO:0000269" key="2">
    <source>
    </source>
</evidence>
<evidence type="ECO:0000305" key="3"/>
<organism>
    <name type="scientific">Bacillus subtilis (strain 168)</name>
    <dbReference type="NCBI Taxonomy" id="224308"/>
    <lineage>
        <taxon>Bacteria</taxon>
        <taxon>Bacillati</taxon>
        <taxon>Bacillota</taxon>
        <taxon>Bacilli</taxon>
        <taxon>Bacillales</taxon>
        <taxon>Bacillaceae</taxon>
        <taxon>Bacillus</taxon>
    </lineage>
</organism>
<name>YBGB_BACSU</name>
<feature type="chain" id="PRO_0000360714" description="Uncharacterized membrane protein YbgB">
    <location>
        <begin position="1"/>
        <end position="91"/>
    </location>
</feature>
<feature type="transmembrane region" description="Helical" evidence="1">
    <location>
        <begin position="9"/>
        <end position="29"/>
    </location>
</feature>
<feature type="transmembrane region" description="Helical" evidence="1">
    <location>
        <begin position="44"/>
        <end position="64"/>
    </location>
</feature>
<feature type="transmembrane region" description="Helical" evidence="1">
    <location>
        <begin position="71"/>
        <end position="91"/>
    </location>
</feature>
<sequence length="91" mass="10273">MFLFTNGKVLWGAVIAAFILSIVFYPFLPTQMPIHYDVANSPDLTVNKLAGTVMLPVLMVVFAWARKINWQFVFAVYILLICHIVVLCLAL</sequence>
<keyword id="KW-1003">Cell membrane</keyword>
<keyword id="KW-0472">Membrane</keyword>
<keyword id="KW-1185">Reference proteome</keyword>
<keyword id="KW-0812">Transmembrane</keyword>
<keyword id="KW-1133">Transmembrane helix</keyword>
<proteinExistence type="evidence at transcript level"/>
<accession>O31460</accession>
<accession>O87099</accession>
<reference key="1">
    <citation type="submission" date="1997-07" db="EMBL/GenBank/DDBJ databases">
        <title>Sequence analysis of the 70kb region between 17 and 23 degree of the Bacillus subtilis chromosome.</title>
        <authorList>
            <person name="Haga K."/>
            <person name="Liu H."/>
            <person name="Yasumoto K."/>
            <person name="Takahashi H."/>
            <person name="Yoshikawa H."/>
        </authorList>
    </citation>
    <scope>NUCLEOTIDE SEQUENCE [GENOMIC DNA]</scope>
    <source>
        <strain>168</strain>
    </source>
</reference>
<reference key="2">
    <citation type="journal article" date="1997" name="Nature">
        <title>The complete genome sequence of the Gram-positive bacterium Bacillus subtilis.</title>
        <authorList>
            <person name="Kunst F."/>
            <person name="Ogasawara N."/>
            <person name="Moszer I."/>
            <person name="Albertini A.M."/>
            <person name="Alloni G."/>
            <person name="Azevedo V."/>
            <person name="Bertero M.G."/>
            <person name="Bessieres P."/>
            <person name="Bolotin A."/>
            <person name="Borchert S."/>
            <person name="Borriss R."/>
            <person name="Boursier L."/>
            <person name="Brans A."/>
            <person name="Braun M."/>
            <person name="Brignell S.C."/>
            <person name="Bron S."/>
            <person name="Brouillet S."/>
            <person name="Bruschi C.V."/>
            <person name="Caldwell B."/>
            <person name="Capuano V."/>
            <person name="Carter N.M."/>
            <person name="Choi S.-K."/>
            <person name="Codani J.-J."/>
            <person name="Connerton I.F."/>
            <person name="Cummings N.J."/>
            <person name="Daniel R.A."/>
            <person name="Denizot F."/>
            <person name="Devine K.M."/>
            <person name="Duesterhoeft A."/>
            <person name="Ehrlich S.D."/>
            <person name="Emmerson P.T."/>
            <person name="Entian K.-D."/>
            <person name="Errington J."/>
            <person name="Fabret C."/>
            <person name="Ferrari E."/>
            <person name="Foulger D."/>
            <person name="Fritz C."/>
            <person name="Fujita M."/>
            <person name="Fujita Y."/>
            <person name="Fuma S."/>
            <person name="Galizzi A."/>
            <person name="Galleron N."/>
            <person name="Ghim S.-Y."/>
            <person name="Glaser P."/>
            <person name="Goffeau A."/>
            <person name="Golightly E.J."/>
            <person name="Grandi G."/>
            <person name="Guiseppi G."/>
            <person name="Guy B.J."/>
            <person name="Haga K."/>
            <person name="Haiech J."/>
            <person name="Harwood C.R."/>
            <person name="Henaut A."/>
            <person name="Hilbert H."/>
            <person name="Holsappel S."/>
            <person name="Hosono S."/>
            <person name="Hullo M.-F."/>
            <person name="Itaya M."/>
            <person name="Jones L.-M."/>
            <person name="Joris B."/>
            <person name="Karamata D."/>
            <person name="Kasahara Y."/>
            <person name="Klaerr-Blanchard M."/>
            <person name="Klein C."/>
            <person name="Kobayashi Y."/>
            <person name="Koetter P."/>
            <person name="Koningstein G."/>
            <person name="Krogh S."/>
            <person name="Kumano M."/>
            <person name="Kurita K."/>
            <person name="Lapidus A."/>
            <person name="Lardinois S."/>
            <person name="Lauber J."/>
            <person name="Lazarevic V."/>
            <person name="Lee S.-M."/>
            <person name="Levine A."/>
            <person name="Liu H."/>
            <person name="Masuda S."/>
            <person name="Mauel C."/>
            <person name="Medigue C."/>
            <person name="Medina N."/>
            <person name="Mellado R.P."/>
            <person name="Mizuno M."/>
            <person name="Moestl D."/>
            <person name="Nakai S."/>
            <person name="Noback M."/>
            <person name="Noone D."/>
            <person name="O'Reilly M."/>
            <person name="Ogawa K."/>
            <person name="Ogiwara A."/>
            <person name="Oudega B."/>
            <person name="Park S.-H."/>
            <person name="Parro V."/>
            <person name="Pohl T.M."/>
            <person name="Portetelle D."/>
            <person name="Porwollik S."/>
            <person name="Prescott A.M."/>
            <person name="Presecan E."/>
            <person name="Pujic P."/>
            <person name="Purnelle B."/>
            <person name="Rapoport G."/>
            <person name="Rey M."/>
            <person name="Reynolds S."/>
            <person name="Rieger M."/>
            <person name="Rivolta C."/>
            <person name="Rocha E."/>
            <person name="Roche B."/>
            <person name="Rose M."/>
            <person name="Sadaie Y."/>
            <person name="Sato T."/>
            <person name="Scanlan E."/>
            <person name="Schleich S."/>
            <person name="Schroeter R."/>
            <person name="Scoffone F."/>
            <person name="Sekiguchi J."/>
            <person name="Sekowska A."/>
            <person name="Seror S.J."/>
            <person name="Serror P."/>
            <person name="Shin B.-S."/>
            <person name="Soldo B."/>
            <person name="Sorokin A."/>
            <person name="Tacconi E."/>
            <person name="Takagi T."/>
            <person name="Takahashi H."/>
            <person name="Takemaru K."/>
            <person name="Takeuchi M."/>
            <person name="Tamakoshi A."/>
            <person name="Tanaka T."/>
            <person name="Terpstra P."/>
            <person name="Tognoni A."/>
            <person name="Tosato V."/>
            <person name="Uchiyama S."/>
            <person name="Vandenbol M."/>
            <person name="Vannier F."/>
            <person name="Vassarotti A."/>
            <person name="Viari A."/>
            <person name="Wambutt R."/>
            <person name="Wedler E."/>
            <person name="Wedler H."/>
            <person name="Weitzenegger T."/>
            <person name="Winters P."/>
            <person name="Wipat A."/>
            <person name="Yamamoto H."/>
            <person name="Yamane K."/>
            <person name="Yasumoto K."/>
            <person name="Yata K."/>
            <person name="Yoshida K."/>
            <person name="Yoshikawa H.-F."/>
            <person name="Zumstein E."/>
            <person name="Yoshikawa H."/>
            <person name="Danchin A."/>
        </authorList>
    </citation>
    <scope>NUCLEOTIDE SEQUENCE [LARGE SCALE GENOMIC DNA]</scope>
    <source>
        <strain>168</strain>
    </source>
</reference>
<reference key="3">
    <citation type="journal article" date="2003" name="J. Bacteriol.">
        <title>Regulation of the Bacillus subtilis extracytoplasmic function protein sigma(Y) and its target promoters.</title>
        <authorList>
            <person name="Cao M."/>
            <person name="Salzberg L."/>
            <person name="Tsai C.S."/>
            <person name="Mascher T."/>
            <person name="Bonilla C."/>
            <person name="Wang T."/>
            <person name="Ye R.W."/>
            <person name="Marquez-Magana L."/>
            <person name="Helmann J.D."/>
        </authorList>
    </citation>
    <scope>INDUCTION</scope>
</reference>
<dbReference type="EMBL" id="AB006424">
    <property type="protein sequence ID" value="BAA33135.1"/>
    <property type="status" value="ALT_FRAME"/>
    <property type="molecule type" value="Genomic_DNA"/>
</dbReference>
<dbReference type="EMBL" id="AL009126">
    <property type="protein sequence ID" value="CAB12032.1"/>
    <property type="molecule type" value="Genomic_DNA"/>
</dbReference>
<dbReference type="PIR" id="G69750">
    <property type="entry name" value="G69750"/>
</dbReference>
<dbReference type="RefSeq" id="NP_388120.1">
    <property type="nucleotide sequence ID" value="NC_000964.3"/>
</dbReference>
<dbReference type="RefSeq" id="WP_003234840.1">
    <property type="nucleotide sequence ID" value="NZ_OZ025638.1"/>
</dbReference>
<dbReference type="FunCoup" id="O31460">
    <property type="interactions" value="113"/>
</dbReference>
<dbReference type="STRING" id="224308.BSU02380"/>
<dbReference type="PaxDb" id="224308-BSU02380"/>
<dbReference type="EnsemblBacteria" id="CAB12032">
    <property type="protein sequence ID" value="CAB12032"/>
    <property type="gene ID" value="BSU_02380"/>
</dbReference>
<dbReference type="GeneID" id="938423"/>
<dbReference type="KEGG" id="bsu:BSU02380"/>
<dbReference type="PATRIC" id="fig|224308.179.peg.244"/>
<dbReference type="InParanoid" id="O31460"/>
<dbReference type="OrthoDB" id="2918262at2"/>
<dbReference type="BioCyc" id="BSUB:BSU02380-MONOMER"/>
<dbReference type="Proteomes" id="UP000001570">
    <property type="component" value="Chromosome"/>
</dbReference>
<dbReference type="GO" id="GO:0005886">
    <property type="term" value="C:plasma membrane"/>
    <property type="evidence" value="ECO:0007669"/>
    <property type="project" value="UniProtKB-SubCell"/>
</dbReference>
<dbReference type="InterPro" id="IPR012867">
    <property type="entry name" value="DUF1648"/>
</dbReference>
<dbReference type="Pfam" id="PF07853">
    <property type="entry name" value="DUF1648"/>
    <property type="match status" value="1"/>
</dbReference>
<protein>
    <recommendedName>
        <fullName>Uncharacterized membrane protein YbgB</fullName>
    </recommendedName>
</protein>
<comment type="subcellular location">
    <subcellularLocation>
        <location evidence="3">Cell membrane</location>
        <topology evidence="3">Multi-pass membrane protein</topology>
    </subcellularLocation>
</comment>
<comment type="induction">
    <text evidence="2">Expression controlled by a sigma-Y-regulated promoter which needs the sigma-Y factor for the binding of the RNA polymerase and subsequent transcription.</text>
</comment>
<comment type="sequence caution" evidence="3">
    <conflict type="frameshift">
        <sequence resource="EMBL-CDS" id="BAA33135"/>
    </conflict>
</comment>
<gene>
    <name type="primary">ybgB</name>
    <name type="ordered locus">BSU02380</name>
</gene>